<feature type="chain" id="PRO_0000101613" description="Ribosomal RNA small subunit methyltransferase A">
    <location>
        <begin position="1"/>
        <end position="295"/>
    </location>
</feature>
<feature type="binding site" evidence="1">
    <location>
        <position position="33"/>
    </location>
    <ligand>
        <name>S-adenosyl-L-methionine</name>
        <dbReference type="ChEBI" id="CHEBI:59789"/>
    </ligand>
</feature>
<feature type="binding site" evidence="1">
    <location>
        <position position="35"/>
    </location>
    <ligand>
        <name>S-adenosyl-L-methionine</name>
        <dbReference type="ChEBI" id="CHEBI:59789"/>
    </ligand>
</feature>
<feature type="binding site" evidence="1">
    <location>
        <position position="60"/>
    </location>
    <ligand>
        <name>S-adenosyl-L-methionine</name>
        <dbReference type="ChEBI" id="CHEBI:59789"/>
    </ligand>
</feature>
<feature type="binding site" evidence="1">
    <location>
        <position position="81"/>
    </location>
    <ligand>
        <name>S-adenosyl-L-methionine</name>
        <dbReference type="ChEBI" id="CHEBI:59789"/>
    </ligand>
</feature>
<feature type="binding site" evidence="1">
    <location>
        <position position="111"/>
    </location>
    <ligand>
        <name>S-adenosyl-L-methionine</name>
        <dbReference type="ChEBI" id="CHEBI:59789"/>
    </ligand>
</feature>
<feature type="binding site" evidence="1">
    <location>
        <position position="129"/>
    </location>
    <ligand>
        <name>S-adenosyl-L-methionine</name>
        <dbReference type="ChEBI" id="CHEBI:59789"/>
    </ligand>
</feature>
<accession>Q82HC3</accession>
<keyword id="KW-0963">Cytoplasm</keyword>
<keyword id="KW-0489">Methyltransferase</keyword>
<keyword id="KW-1185">Reference proteome</keyword>
<keyword id="KW-0694">RNA-binding</keyword>
<keyword id="KW-0698">rRNA processing</keyword>
<keyword id="KW-0949">S-adenosyl-L-methionine</keyword>
<keyword id="KW-0808">Transferase</keyword>
<gene>
    <name evidence="1" type="primary">rsmA</name>
    <name evidence="1" type="synonym">ksgA</name>
    <name type="ordered locus">SAV_3587</name>
</gene>
<sequence>MSSPAPDALLGPADIRELAAALGVRPTKQRGQNFVIDANTVRRIVRTAGVRPDDVVVEVGPGLGSLTLALLEAADRVIAVEIDDVLAGALPATIAARMPERAERFALVHSDAMHVRELPGPPPTALVANLPYNVAVPVLLHMLDTFPSIERTLVMVQAEVADRLAADPGSRVYGVPSVKANWHAEVKRAGSIGRNVFWPAPNVDSGLVSLVRRTEPIKTTASKTEVFAVVDAAFAQRRKTLRAALAGWAGSAAAAEAALVAAGVSPQARGESLTVEEFARIAENRGADHADDANN</sequence>
<dbReference type="EC" id="2.1.1.182" evidence="1"/>
<dbReference type="EMBL" id="BA000030">
    <property type="protein sequence ID" value="BAC71299.1"/>
    <property type="molecule type" value="Genomic_DNA"/>
</dbReference>
<dbReference type="RefSeq" id="WP_010985018.1">
    <property type="nucleotide sequence ID" value="NZ_JZJK01000090.1"/>
</dbReference>
<dbReference type="SMR" id="Q82HC3"/>
<dbReference type="GeneID" id="41540652"/>
<dbReference type="KEGG" id="sma:SAVERM_3587"/>
<dbReference type="eggNOG" id="COG0030">
    <property type="taxonomic scope" value="Bacteria"/>
</dbReference>
<dbReference type="HOGENOM" id="CLU_041220_1_1_11"/>
<dbReference type="OrthoDB" id="9814755at2"/>
<dbReference type="Proteomes" id="UP000000428">
    <property type="component" value="Chromosome"/>
</dbReference>
<dbReference type="GO" id="GO:0005829">
    <property type="term" value="C:cytosol"/>
    <property type="evidence" value="ECO:0007669"/>
    <property type="project" value="TreeGrafter"/>
</dbReference>
<dbReference type="GO" id="GO:0052908">
    <property type="term" value="F:16S rRNA (adenine(1518)-N(6)/adenine(1519)-N(6))-dimethyltransferase activity"/>
    <property type="evidence" value="ECO:0007669"/>
    <property type="project" value="UniProtKB-EC"/>
</dbReference>
<dbReference type="GO" id="GO:0003723">
    <property type="term" value="F:RNA binding"/>
    <property type="evidence" value="ECO:0007669"/>
    <property type="project" value="UniProtKB-KW"/>
</dbReference>
<dbReference type="CDD" id="cd02440">
    <property type="entry name" value="AdoMet_MTases"/>
    <property type="match status" value="1"/>
</dbReference>
<dbReference type="FunFam" id="1.10.8.100:FF:000003">
    <property type="entry name" value="Ribosomal RNA small subunit methyltransferase A"/>
    <property type="match status" value="1"/>
</dbReference>
<dbReference type="FunFam" id="3.40.50.150:FF:000023">
    <property type="entry name" value="Ribosomal RNA small subunit methyltransferase A"/>
    <property type="match status" value="1"/>
</dbReference>
<dbReference type="Gene3D" id="1.10.8.100">
    <property type="entry name" value="Ribosomal RNA adenine dimethylase-like, domain 2"/>
    <property type="match status" value="1"/>
</dbReference>
<dbReference type="Gene3D" id="3.40.50.150">
    <property type="entry name" value="Vaccinia Virus protein VP39"/>
    <property type="match status" value="1"/>
</dbReference>
<dbReference type="HAMAP" id="MF_00607">
    <property type="entry name" value="16SrRNA_methyltr_A"/>
    <property type="match status" value="1"/>
</dbReference>
<dbReference type="InterPro" id="IPR001737">
    <property type="entry name" value="KsgA/Erm"/>
</dbReference>
<dbReference type="InterPro" id="IPR023165">
    <property type="entry name" value="rRNA_Ade_diMease-like_C"/>
</dbReference>
<dbReference type="InterPro" id="IPR020596">
    <property type="entry name" value="rRNA_Ade_Mease_Trfase_CS"/>
</dbReference>
<dbReference type="InterPro" id="IPR020598">
    <property type="entry name" value="rRNA_Ade_methylase_Trfase_N"/>
</dbReference>
<dbReference type="InterPro" id="IPR011530">
    <property type="entry name" value="rRNA_adenine_dimethylase"/>
</dbReference>
<dbReference type="InterPro" id="IPR029063">
    <property type="entry name" value="SAM-dependent_MTases_sf"/>
</dbReference>
<dbReference type="NCBIfam" id="TIGR00755">
    <property type="entry name" value="ksgA"/>
    <property type="match status" value="1"/>
</dbReference>
<dbReference type="PANTHER" id="PTHR11727">
    <property type="entry name" value="DIMETHYLADENOSINE TRANSFERASE"/>
    <property type="match status" value="1"/>
</dbReference>
<dbReference type="PANTHER" id="PTHR11727:SF7">
    <property type="entry name" value="DIMETHYLADENOSINE TRANSFERASE-RELATED"/>
    <property type="match status" value="1"/>
</dbReference>
<dbReference type="Pfam" id="PF00398">
    <property type="entry name" value="RrnaAD"/>
    <property type="match status" value="1"/>
</dbReference>
<dbReference type="SMART" id="SM00650">
    <property type="entry name" value="rADc"/>
    <property type="match status" value="1"/>
</dbReference>
<dbReference type="SUPFAM" id="SSF53335">
    <property type="entry name" value="S-adenosyl-L-methionine-dependent methyltransferases"/>
    <property type="match status" value="1"/>
</dbReference>
<dbReference type="PROSITE" id="PS01131">
    <property type="entry name" value="RRNA_A_DIMETH"/>
    <property type="match status" value="1"/>
</dbReference>
<dbReference type="PROSITE" id="PS51689">
    <property type="entry name" value="SAM_RNA_A_N6_MT"/>
    <property type="match status" value="1"/>
</dbReference>
<proteinExistence type="inferred from homology"/>
<name>RSMA_STRAW</name>
<reference key="1">
    <citation type="journal article" date="2001" name="Proc. Natl. Acad. Sci. U.S.A.">
        <title>Genome sequence of an industrial microorganism Streptomyces avermitilis: deducing the ability of producing secondary metabolites.</title>
        <authorList>
            <person name="Omura S."/>
            <person name="Ikeda H."/>
            <person name="Ishikawa J."/>
            <person name="Hanamoto A."/>
            <person name="Takahashi C."/>
            <person name="Shinose M."/>
            <person name="Takahashi Y."/>
            <person name="Horikawa H."/>
            <person name="Nakazawa H."/>
            <person name="Osonoe T."/>
            <person name="Kikuchi H."/>
            <person name="Shiba T."/>
            <person name="Sakaki Y."/>
            <person name="Hattori M."/>
        </authorList>
    </citation>
    <scope>NUCLEOTIDE SEQUENCE [LARGE SCALE GENOMIC DNA]</scope>
    <source>
        <strain>ATCC 31267 / DSM 46492 / JCM 5070 / NBRC 14893 / NCIMB 12804 / NRRL 8165 / MA-4680</strain>
    </source>
</reference>
<reference key="2">
    <citation type="journal article" date="2003" name="Nat. Biotechnol.">
        <title>Complete genome sequence and comparative analysis of the industrial microorganism Streptomyces avermitilis.</title>
        <authorList>
            <person name="Ikeda H."/>
            <person name="Ishikawa J."/>
            <person name="Hanamoto A."/>
            <person name="Shinose M."/>
            <person name="Kikuchi H."/>
            <person name="Shiba T."/>
            <person name="Sakaki Y."/>
            <person name="Hattori M."/>
            <person name="Omura S."/>
        </authorList>
    </citation>
    <scope>NUCLEOTIDE SEQUENCE [LARGE SCALE GENOMIC DNA]</scope>
    <source>
        <strain>ATCC 31267 / DSM 46492 / JCM 5070 / NBRC 14893 / NCIMB 12804 / NRRL 8165 / MA-4680</strain>
    </source>
</reference>
<organism>
    <name type="scientific">Streptomyces avermitilis (strain ATCC 31267 / DSM 46492 / JCM 5070 / NBRC 14893 / NCIMB 12804 / NRRL 8165 / MA-4680)</name>
    <dbReference type="NCBI Taxonomy" id="227882"/>
    <lineage>
        <taxon>Bacteria</taxon>
        <taxon>Bacillati</taxon>
        <taxon>Actinomycetota</taxon>
        <taxon>Actinomycetes</taxon>
        <taxon>Kitasatosporales</taxon>
        <taxon>Streptomycetaceae</taxon>
        <taxon>Streptomyces</taxon>
    </lineage>
</organism>
<protein>
    <recommendedName>
        <fullName evidence="1">Ribosomal RNA small subunit methyltransferase A</fullName>
        <ecNumber evidence="1">2.1.1.182</ecNumber>
    </recommendedName>
    <alternativeName>
        <fullName evidence="1">16S rRNA (adenine(1518)-N(6)/adenine(1519)-N(6))-dimethyltransferase</fullName>
    </alternativeName>
    <alternativeName>
        <fullName evidence="1">16S rRNA dimethyladenosine transferase</fullName>
    </alternativeName>
    <alternativeName>
        <fullName evidence="1">16S rRNA dimethylase</fullName>
    </alternativeName>
    <alternativeName>
        <fullName evidence="1">S-adenosylmethionine-6-N', N'-adenosyl(rRNA) dimethyltransferase</fullName>
    </alternativeName>
</protein>
<comment type="function">
    <text evidence="1">Specifically dimethylates two adjacent adenosines (A1518 and A1519) in the loop of a conserved hairpin near the 3'-end of 16S rRNA in the 30S particle. May play a critical role in biogenesis of 30S subunits.</text>
</comment>
<comment type="catalytic activity">
    <reaction evidence="1">
        <text>adenosine(1518)/adenosine(1519) in 16S rRNA + 4 S-adenosyl-L-methionine = N(6)-dimethyladenosine(1518)/N(6)-dimethyladenosine(1519) in 16S rRNA + 4 S-adenosyl-L-homocysteine + 4 H(+)</text>
        <dbReference type="Rhea" id="RHEA:19609"/>
        <dbReference type="Rhea" id="RHEA-COMP:10232"/>
        <dbReference type="Rhea" id="RHEA-COMP:10233"/>
        <dbReference type="ChEBI" id="CHEBI:15378"/>
        <dbReference type="ChEBI" id="CHEBI:57856"/>
        <dbReference type="ChEBI" id="CHEBI:59789"/>
        <dbReference type="ChEBI" id="CHEBI:74411"/>
        <dbReference type="ChEBI" id="CHEBI:74493"/>
        <dbReference type="EC" id="2.1.1.182"/>
    </reaction>
</comment>
<comment type="subcellular location">
    <subcellularLocation>
        <location evidence="1">Cytoplasm</location>
    </subcellularLocation>
</comment>
<comment type="similarity">
    <text evidence="1">Belongs to the class I-like SAM-binding methyltransferase superfamily. rRNA adenine N(6)-methyltransferase family. RsmA subfamily.</text>
</comment>
<evidence type="ECO:0000255" key="1">
    <source>
        <dbReference type="HAMAP-Rule" id="MF_00607"/>
    </source>
</evidence>